<keyword id="KW-0010">Activator</keyword>
<keyword id="KW-0963">Cytoplasm</keyword>
<keyword id="KW-0238">DNA-binding</keyword>
<keyword id="KW-1185">Reference proteome</keyword>
<keyword id="KW-0677">Repeat</keyword>
<keyword id="KW-0684">Rhamnose metabolism</keyword>
<keyword id="KW-0804">Transcription</keyword>
<keyword id="KW-0805">Transcription regulation</keyword>
<organism>
    <name type="scientific">Salmonella typhimurium (strain LT2 / SGSC1412 / ATCC 700720)</name>
    <dbReference type="NCBI Taxonomy" id="99287"/>
    <lineage>
        <taxon>Bacteria</taxon>
        <taxon>Pseudomonadati</taxon>
        <taxon>Pseudomonadota</taxon>
        <taxon>Gammaproteobacteria</taxon>
        <taxon>Enterobacterales</taxon>
        <taxon>Enterobacteriaceae</taxon>
        <taxon>Salmonella</taxon>
    </lineage>
</organism>
<protein>
    <recommendedName>
        <fullName evidence="1">HTH-type transcriptional activator RhaS</fullName>
    </recommendedName>
    <alternativeName>
        <fullName evidence="1">L-rhamnose operon regulatory protein RhaS</fullName>
    </alternativeName>
</protein>
<sequence length="278" mass="32089">MTVLHSVDFFPSGKAPVAIEPRLPQAAFPEHHHDFHEIVIVEHGTGIHVFNGQPYTISGGTVCFVRDHDRHLYEHTDNLCLTNVLWRSPDAFQFLAGLDQLLPQEQDGYYPSHWRVNQSVLQQVRQLVGLMERAGDGMDAPAVANREILFMQLLVLLRRSSLMEGATNNDAKLNQLMAWLEDHFAEEVCWEAVAEQFSLSLRTLHRQLKQHTGLTPQRYLNRLRLIKARHLLRHSDHSVTEIAYRCGFGDSNHFSTLFRREFNWSPRDIRQGRDAIIQ</sequence>
<name>RHAS_SALTY</name>
<accession>P0A2S9</accession>
<accession>P27029</accession>
<feature type="chain" id="PRO_0000194571" description="HTH-type transcriptional activator RhaS">
    <location>
        <begin position="1"/>
        <end position="278"/>
    </location>
</feature>
<feature type="domain" description="HTH araC/xylS-type" evidence="1">
    <location>
        <begin position="174"/>
        <end position="272"/>
    </location>
</feature>
<feature type="DNA-binding region" description="H-T-H motif" evidence="1">
    <location>
        <begin position="191"/>
        <end position="212"/>
    </location>
</feature>
<feature type="DNA-binding region" description="H-T-H motif" evidence="1">
    <location>
        <begin position="239"/>
        <end position="262"/>
    </location>
</feature>
<feature type="site" description="Interaction with sigma-70" evidence="1">
    <location>
        <position position="241"/>
    </location>
</feature>
<feature type="site" description="Interaction with sigma-70" evidence="1">
    <location>
        <position position="250"/>
    </location>
</feature>
<feature type="sequence conflict" description="In Ref. 1; CAA40556." evidence="2" ref="1">
    <original>QLLPQ</original>
    <variation>HCCR</variation>
    <location>
        <begin position="100"/>
        <end position="104"/>
    </location>
</feature>
<comment type="function">
    <text evidence="1">Activates expression of the rhaBAD and rhaT operons.</text>
</comment>
<comment type="subunit">
    <text evidence="1">Binds DNA as a dimer.</text>
</comment>
<comment type="subcellular location">
    <subcellularLocation>
        <location evidence="1">Cytoplasm</location>
    </subcellularLocation>
</comment>
<dbReference type="EMBL" id="X57299">
    <property type="protein sequence ID" value="CAA40556.1"/>
    <property type="molecule type" value="Genomic_DNA"/>
</dbReference>
<dbReference type="EMBL" id="AE006468">
    <property type="protein sequence ID" value="AAL22888.1"/>
    <property type="molecule type" value="Genomic_DNA"/>
</dbReference>
<dbReference type="PIR" id="JQ1288">
    <property type="entry name" value="JQ1288"/>
</dbReference>
<dbReference type="RefSeq" id="NP_462929.1">
    <property type="nucleotide sequence ID" value="NC_003197.2"/>
</dbReference>
<dbReference type="RefSeq" id="WP_000217112.1">
    <property type="nucleotide sequence ID" value="NC_003197.2"/>
</dbReference>
<dbReference type="SMR" id="P0A2S9"/>
<dbReference type="STRING" id="99287.STM4048"/>
<dbReference type="PaxDb" id="99287-STM4048"/>
<dbReference type="DNASU" id="1255575"/>
<dbReference type="GeneID" id="1255575"/>
<dbReference type="KEGG" id="stm:STM4048"/>
<dbReference type="PATRIC" id="fig|99287.12.peg.4265"/>
<dbReference type="HOGENOM" id="CLU_000445_88_5_6"/>
<dbReference type="OMA" id="GHYPSHW"/>
<dbReference type="PhylomeDB" id="P0A2S9"/>
<dbReference type="BioCyc" id="SENT99287:STM4048-MONOMER"/>
<dbReference type="Proteomes" id="UP000001014">
    <property type="component" value="Chromosome"/>
</dbReference>
<dbReference type="GO" id="GO:0005737">
    <property type="term" value="C:cytoplasm"/>
    <property type="evidence" value="ECO:0007669"/>
    <property type="project" value="UniProtKB-SubCell"/>
</dbReference>
<dbReference type="GO" id="GO:0003700">
    <property type="term" value="F:DNA-binding transcription factor activity"/>
    <property type="evidence" value="ECO:0007669"/>
    <property type="project" value="UniProtKB-UniRule"/>
</dbReference>
<dbReference type="GO" id="GO:0043565">
    <property type="term" value="F:sequence-specific DNA binding"/>
    <property type="evidence" value="ECO:0007669"/>
    <property type="project" value="InterPro"/>
</dbReference>
<dbReference type="GO" id="GO:0045893">
    <property type="term" value="P:positive regulation of DNA-templated transcription"/>
    <property type="evidence" value="ECO:0007669"/>
    <property type="project" value="UniProtKB-UniRule"/>
</dbReference>
<dbReference type="GO" id="GO:0019299">
    <property type="term" value="P:rhamnose metabolic process"/>
    <property type="evidence" value="ECO:0007669"/>
    <property type="project" value="UniProtKB-UniRule"/>
</dbReference>
<dbReference type="CDD" id="cd06977">
    <property type="entry name" value="cupin_RhaR_RhaS-like_N"/>
    <property type="match status" value="1"/>
</dbReference>
<dbReference type="Gene3D" id="1.10.10.60">
    <property type="entry name" value="Homeodomain-like"/>
    <property type="match status" value="1"/>
</dbReference>
<dbReference type="Gene3D" id="2.60.120.10">
    <property type="entry name" value="Jelly Rolls"/>
    <property type="match status" value="1"/>
</dbReference>
<dbReference type="HAMAP" id="MF_01534">
    <property type="entry name" value="HTH_type_RhaS"/>
    <property type="match status" value="1"/>
</dbReference>
<dbReference type="InterPro" id="IPR003313">
    <property type="entry name" value="AraC-bd"/>
</dbReference>
<dbReference type="InterPro" id="IPR050204">
    <property type="entry name" value="AraC_XylS_family_regulators"/>
</dbReference>
<dbReference type="InterPro" id="IPR009057">
    <property type="entry name" value="Homeodomain-like_sf"/>
</dbReference>
<dbReference type="InterPro" id="IPR037923">
    <property type="entry name" value="HTH-like"/>
</dbReference>
<dbReference type="InterPro" id="IPR018060">
    <property type="entry name" value="HTH_AraC"/>
</dbReference>
<dbReference type="InterPro" id="IPR018062">
    <property type="entry name" value="HTH_AraC-typ_CS"/>
</dbReference>
<dbReference type="InterPro" id="IPR047220">
    <property type="entry name" value="RhaR_RhaS-like_N"/>
</dbReference>
<dbReference type="InterPro" id="IPR014710">
    <property type="entry name" value="RmlC-like_jellyroll"/>
</dbReference>
<dbReference type="InterPro" id="IPR020449">
    <property type="entry name" value="Tscrpt_reg_AraC-type_HTH"/>
</dbReference>
<dbReference type="InterPro" id="IPR023609">
    <property type="entry name" value="Tscrpt_reg_HTH_RhaS"/>
</dbReference>
<dbReference type="NCBIfam" id="NF010028">
    <property type="entry name" value="PRK13503.1"/>
    <property type="match status" value="1"/>
</dbReference>
<dbReference type="PANTHER" id="PTHR46796:SF13">
    <property type="entry name" value="HTH-TYPE TRANSCRIPTIONAL ACTIVATOR RHAS"/>
    <property type="match status" value="1"/>
</dbReference>
<dbReference type="PANTHER" id="PTHR46796">
    <property type="entry name" value="HTH-TYPE TRANSCRIPTIONAL ACTIVATOR RHAS-RELATED"/>
    <property type="match status" value="1"/>
</dbReference>
<dbReference type="Pfam" id="PF02311">
    <property type="entry name" value="AraC_binding"/>
    <property type="match status" value="1"/>
</dbReference>
<dbReference type="Pfam" id="PF12833">
    <property type="entry name" value="HTH_18"/>
    <property type="match status" value="1"/>
</dbReference>
<dbReference type="PRINTS" id="PR00032">
    <property type="entry name" value="HTHARAC"/>
</dbReference>
<dbReference type="SMART" id="SM00342">
    <property type="entry name" value="HTH_ARAC"/>
    <property type="match status" value="1"/>
</dbReference>
<dbReference type="SUPFAM" id="SSF46689">
    <property type="entry name" value="Homeodomain-like"/>
    <property type="match status" value="2"/>
</dbReference>
<dbReference type="SUPFAM" id="SSF51215">
    <property type="entry name" value="Regulatory protein AraC"/>
    <property type="match status" value="1"/>
</dbReference>
<dbReference type="PROSITE" id="PS00041">
    <property type="entry name" value="HTH_ARAC_FAMILY_1"/>
    <property type="match status" value="1"/>
</dbReference>
<dbReference type="PROSITE" id="PS01124">
    <property type="entry name" value="HTH_ARAC_FAMILY_2"/>
    <property type="match status" value="1"/>
</dbReference>
<proteinExistence type="inferred from homology"/>
<reference key="1">
    <citation type="journal article" date="1991" name="Gene">
        <title>Cloning and characterization of the L-rhamnose regulon in Salmonella typhimurium LT2.</title>
        <authorList>
            <person name="Nishitani J."/>
            <person name="Wilcox G."/>
        </authorList>
    </citation>
    <scope>NUCLEOTIDE SEQUENCE [GENOMIC DNA]</scope>
    <source>
        <strain>LT2</strain>
    </source>
</reference>
<reference key="2">
    <citation type="journal article" date="2001" name="Nature">
        <title>Complete genome sequence of Salmonella enterica serovar Typhimurium LT2.</title>
        <authorList>
            <person name="McClelland M."/>
            <person name="Sanderson K.E."/>
            <person name="Spieth J."/>
            <person name="Clifton S.W."/>
            <person name="Latreille P."/>
            <person name="Courtney L."/>
            <person name="Porwollik S."/>
            <person name="Ali J."/>
            <person name="Dante M."/>
            <person name="Du F."/>
            <person name="Hou S."/>
            <person name="Layman D."/>
            <person name="Leonard S."/>
            <person name="Nguyen C."/>
            <person name="Scott K."/>
            <person name="Holmes A."/>
            <person name="Grewal N."/>
            <person name="Mulvaney E."/>
            <person name="Ryan E."/>
            <person name="Sun H."/>
            <person name="Florea L."/>
            <person name="Miller W."/>
            <person name="Stoneking T."/>
            <person name="Nhan M."/>
            <person name="Waterston R."/>
            <person name="Wilson R.K."/>
        </authorList>
    </citation>
    <scope>NUCLEOTIDE SEQUENCE [LARGE SCALE GENOMIC DNA]</scope>
    <source>
        <strain>LT2 / SGSC1412 / ATCC 700720</strain>
    </source>
</reference>
<evidence type="ECO:0000255" key="1">
    <source>
        <dbReference type="HAMAP-Rule" id="MF_01534"/>
    </source>
</evidence>
<evidence type="ECO:0000305" key="2"/>
<gene>
    <name evidence="1" type="primary">rhaS</name>
    <name type="synonym">rhaC2</name>
    <name type="ordered locus">STM4048</name>
</gene>